<comment type="function">
    <text evidence="1">Activates transcription of virulence factors alpha- and beta hemolysin genes (hla and hlb). Also, activates RNAIII expression, a central regulator transcribed from the agr locus (By similarity).</text>
</comment>
<comment type="subcellular location">
    <subcellularLocation>
        <location evidence="1">Cytoplasm</location>
    </subcellularLocation>
</comment>
<comment type="induction">
    <text evidence="1">Transcriptionally activated by CvfA.</text>
</comment>
<comment type="similarity">
    <text evidence="3">Belongs to the SarZ family.</text>
</comment>
<proteinExistence type="inferred from homology"/>
<accession>Q2YZ47</accession>
<gene>
    <name type="primary">sarZ</name>
    <name type="ordered locus">SAB2265</name>
</gene>
<dbReference type="EMBL" id="AJ938182">
    <property type="protein sequence ID" value="CAI81954.1"/>
    <property type="molecule type" value="Genomic_DNA"/>
</dbReference>
<dbReference type="RefSeq" id="WP_000289215.1">
    <property type="nucleotide sequence ID" value="NC_007622.1"/>
</dbReference>
<dbReference type="SMR" id="Q2YZ47"/>
<dbReference type="KEGG" id="sab:SAB2265"/>
<dbReference type="HOGENOM" id="CLU_083287_3_2_9"/>
<dbReference type="GO" id="GO:0005737">
    <property type="term" value="C:cytoplasm"/>
    <property type="evidence" value="ECO:0007669"/>
    <property type="project" value="UniProtKB-SubCell"/>
</dbReference>
<dbReference type="GO" id="GO:0003677">
    <property type="term" value="F:DNA binding"/>
    <property type="evidence" value="ECO:0007669"/>
    <property type="project" value="UniProtKB-KW"/>
</dbReference>
<dbReference type="GO" id="GO:0003700">
    <property type="term" value="F:DNA-binding transcription factor activity"/>
    <property type="evidence" value="ECO:0007669"/>
    <property type="project" value="InterPro"/>
</dbReference>
<dbReference type="FunFam" id="1.10.10.10:FF:000163">
    <property type="entry name" value="MarR family transcriptional regulator"/>
    <property type="match status" value="1"/>
</dbReference>
<dbReference type="Gene3D" id="1.10.10.10">
    <property type="entry name" value="Winged helix-like DNA-binding domain superfamily/Winged helix DNA-binding domain"/>
    <property type="match status" value="1"/>
</dbReference>
<dbReference type="InterPro" id="IPR000835">
    <property type="entry name" value="HTH_MarR-typ"/>
</dbReference>
<dbReference type="InterPro" id="IPR055166">
    <property type="entry name" value="Transc_reg_Sar_Rot_HTH"/>
</dbReference>
<dbReference type="InterPro" id="IPR036388">
    <property type="entry name" value="WH-like_DNA-bd_sf"/>
</dbReference>
<dbReference type="InterPro" id="IPR036390">
    <property type="entry name" value="WH_DNA-bd_sf"/>
</dbReference>
<dbReference type="PANTHER" id="PTHR42756">
    <property type="entry name" value="TRANSCRIPTIONAL REGULATOR, MARR"/>
    <property type="match status" value="1"/>
</dbReference>
<dbReference type="PANTHER" id="PTHR42756:SF1">
    <property type="entry name" value="TRANSCRIPTIONAL REPRESSOR OF EMRAB OPERON"/>
    <property type="match status" value="1"/>
</dbReference>
<dbReference type="Pfam" id="PF22381">
    <property type="entry name" value="Staph_reg_Sar_Rot"/>
    <property type="match status" value="1"/>
</dbReference>
<dbReference type="PRINTS" id="PR00598">
    <property type="entry name" value="HTHMARR"/>
</dbReference>
<dbReference type="SMART" id="SM00347">
    <property type="entry name" value="HTH_MARR"/>
    <property type="match status" value="1"/>
</dbReference>
<dbReference type="SUPFAM" id="SSF46785">
    <property type="entry name" value="Winged helix' DNA-binding domain"/>
    <property type="match status" value="1"/>
</dbReference>
<dbReference type="PROSITE" id="PS50995">
    <property type="entry name" value="HTH_MARR_2"/>
    <property type="match status" value="1"/>
</dbReference>
<keyword id="KW-0010">Activator</keyword>
<keyword id="KW-0963">Cytoplasm</keyword>
<keyword id="KW-0238">DNA-binding</keyword>
<keyword id="KW-0804">Transcription</keyword>
<keyword id="KW-0805">Transcription regulation</keyword>
<keyword id="KW-0843">Virulence</keyword>
<sequence length="148" mass="17463">MYVENSYLSKQLCFLFYVSSKEIIKKYTNYLKEYDLTYTGYIVLMAIENDEKLNIKKLGERVFLDSGTLTPLLKKLEKKDYVVRTREEKDERNLQISLTEQGKAIKSPLAEISVKVFNEFNISEREASDIINNLRNFVSKNFDYSDRK</sequence>
<organism>
    <name type="scientific">Staphylococcus aureus (strain bovine RF122 / ET3-1)</name>
    <dbReference type="NCBI Taxonomy" id="273036"/>
    <lineage>
        <taxon>Bacteria</taxon>
        <taxon>Bacillati</taxon>
        <taxon>Bacillota</taxon>
        <taxon>Bacilli</taxon>
        <taxon>Bacillales</taxon>
        <taxon>Staphylococcaceae</taxon>
        <taxon>Staphylococcus</taxon>
    </lineage>
</organism>
<feature type="chain" id="PRO_0000284454" description="HTH-type transcriptional regulator SarZ">
    <location>
        <begin position="1"/>
        <end position="148"/>
    </location>
</feature>
<feature type="domain" description="HTH marR-type" evidence="2">
    <location>
        <begin position="9"/>
        <end position="139"/>
    </location>
</feature>
<feature type="DNA-binding region" description="H-T-H motif" evidence="2">
    <location>
        <begin position="55"/>
        <end position="78"/>
    </location>
</feature>
<reference key="1">
    <citation type="journal article" date="2007" name="PLoS ONE">
        <title>Molecular correlates of host specialization in Staphylococcus aureus.</title>
        <authorList>
            <person name="Herron-Olson L."/>
            <person name="Fitzgerald J.R."/>
            <person name="Musser J.M."/>
            <person name="Kapur V."/>
        </authorList>
    </citation>
    <scope>NUCLEOTIDE SEQUENCE [LARGE SCALE GENOMIC DNA]</scope>
    <source>
        <strain>bovine RF122 / ET3-1</strain>
    </source>
</reference>
<protein>
    <recommendedName>
        <fullName>HTH-type transcriptional regulator SarZ</fullName>
    </recommendedName>
    <alternativeName>
        <fullName>Staphylococcal accessory regulator Z</fullName>
    </alternativeName>
</protein>
<name>SARZ_STAAB</name>
<evidence type="ECO:0000250" key="1"/>
<evidence type="ECO:0000255" key="2">
    <source>
        <dbReference type="PROSITE-ProRule" id="PRU00345"/>
    </source>
</evidence>
<evidence type="ECO:0000305" key="3"/>